<comment type="function">
    <text evidence="1">Involved in phosphonate degradation.</text>
</comment>
<comment type="catalytic activity">
    <reaction evidence="1">
        <text>phosphonoacetaldehyde + H2O = acetaldehyde + phosphate + H(+)</text>
        <dbReference type="Rhea" id="RHEA:18905"/>
        <dbReference type="ChEBI" id="CHEBI:15343"/>
        <dbReference type="ChEBI" id="CHEBI:15377"/>
        <dbReference type="ChEBI" id="CHEBI:15378"/>
        <dbReference type="ChEBI" id="CHEBI:43474"/>
        <dbReference type="ChEBI" id="CHEBI:58383"/>
        <dbReference type="EC" id="3.11.1.1"/>
    </reaction>
</comment>
<comment type="cofactor">
    <cofactor evidence="1">
        <name>Mg(2+)</name>
        <dbReference type="ChEBI" id="CHEBI:18420"/>
    </cofactor>
    <text evidence="1">Binds 1 Mg(2+) ion per subunit.</text>
</comment>
<comment type="subunit">
    <text evidence="1">Homodimer.</text>
</comment>
<comment type="similarity">
    <text evidence="1">Belongs to the HAD-like hydrolase superfamily. PhnX family.</text>
</comment>
<keyword id="KW-0378">Hydrolase</keyword>
<keyword id="KW-0460">Magnesium</keyword>
<keyword id="KW-0479">Metal-binding</keyword>
<keyword id="KW-0704">Schiff base</keyword>
<name>PHNX_SALPK</name>
<gene>
    <name evidence="1" type="primary">phnX</name>
    <name type="ordered locus">SSPA2133</name>
</gene>
<organism>
    <name type="scientific">Salmonella paratyphi A (strain AKU_12601)</name>
    <dbReference type="NCBI Taxonomy" id="554290"/>
    <lineage>
        <taxon>Bacteria</taxon>
        <taxon>Pseudomonadati</taxon>
        <taxon>Pseudomonadota</taxon>
        <taxon>Gammaproteobacteria</taxon>
        <taxon>Enterobacterales</taxon>
        <taxon>Enterobacteriaceae</taxon>
        <taxon>Salmonella</taxon>
    </lineage>
</organism>
<protein>
    <recommendedName>
        <fullName evidence="1">Phosphonoacetaldehyde hydrolase</fullName>
        <shortName evidence="1">Phosphonatase</shortName>
        <ecNumber evidence="1">3.11.1.1</ecNumber>
    </recommendedName>
    <alternativeName>
        <fullName evidence="1">Phosphonoacetaldehyde phosphonohydrolase</fullName>
    </alternativeName>
</protein>
<sequence length="269" mass="28535">MNRIHAVILDWAGTTVDFGSFAPTQIFVEAFRQAFDVEITLAEARVPMGLGKWQHIEALGKLPAVDARWQAKFGRAMSAADIDAIYAAFMPLQIAKVVDFSSPIAGVIDTIATLRAEGIKIGSCSGYPRAVMERLVPAAAGHGYCPDHWVATDDLAAGGRPGPWMALQNVIALGIDAVAHCVKVDDAAPGISEGLNAGMWTVGLAVSGNEFGATWDAYQTMSKEDVAVRREHAASKLYAAGAHYVVDSLADLPGVIAHINARLAQGERP</sequence>
<feature type="chain" id="PRO_1000144843" description="Phosphonoacetaldehyde hydrolase">
    <location>
        <begin position="1"/>
        <end position="269"/>
    </location>
</feature>
<feature type="active site" description="Nucleophile" evidence="1">
    <location>
        <position position="10"/>
    </location>
</feature>
<feature type="active site" description="Schiff-base intermediate with substrate" evidence="1">
    <location>
        <position position="52"/>
    </location>
</feature>
<feature type="binding site" evidence="1">
    <location>
        <position position="10"/>
    </location>
    <ligand>
        <name>Mg(2+)</name>
        <dbReference type="ChEBI" id="CHEBI:18420"/>
    </ligand>
</feature>
<feature type="binding site" evidence="1">
    <location>
        <position position="12"/>
    </location>
    <ligand>
        <name>Mg(2+)</name>
        <dbReference type="ChEBI" id="CHEBI:18420"/>
    </ligand>
</feature>
<feature type="binding site" evidence="1">
    <location>
        <position position="186"/>
    </location>
    <ligand>
        <name>Mg(2+)</name>
        <dbReference type="ChEBI" id="CHEBI:18420"/>
    </ligand>
</feature>
<evidence type="ECO:0000255" key="1">
    <source>
        <dbReference type="HAMAP-Rule" id="MF_01375"/>
    </source>
</evidence>
<accession>B5BDA0</accession>
<proteinExistence type="inferred from homology"/>
<dbReference type="EC" id="3.11.1.1" evidence="1"/>
<dbReference type="EMBL" id="FM200053">
    <property type="protein sequence ID" value="CAR60343.1"/>
    <property type="molecule type" value="Genomic_DNA"/>
</dbReference>
<dbReference type="RefSeq" id="WP_011233114.1">
    <property type="nucleotide sequence ID" value="NC_011147.1"/>
</dbReference>
<dbReference type="SMR" id="B5BDA0"/>
<dbReference type="KEGG" id="sek:SSPA2133"/>
<dbReference type="HOGENOM" id="CLU_045011_12_0_6"/>
<dbReference type="Proteomes" id="UP000001869">
    <property type="component" value="Chromosome"/>
</dbReference>
<dbReference type="GO" id="GO:0005829">
    <property type="term" value="C:cytosol"/>
    <property type="evidence" value="ECO:0007669"/>
    <property type="project" value="TreeGrafter"/>
</dbReference>
<dbReference type="GO" id="GO:0000287">
    <property type="term" value="F:magnesium ion binding"/>
    <property type="evidence" value="ECO:0007669"/>
    <property type="project" value="UniProtKB-UniRule"/>
</dbReference>
<dbReference type="GO" id="GO:0008967">
    <property type="term" value="F:phosphoglycolate phosphatase activity"/>
    <property type="evidence" value="ECO:0007669"/>
    <property type="project" value="TreeGrafter"/>
</dbReference>
<dbReference type="GO" id="GO:0050194">
    <property type="term" value="F:phosphonoacetaldehyde hydrolase activity"/>
    <property type="evidence" value="ECO:0007669"/>
    <property type="project" value="UniProtKB-UniRule"/>
</dbReference>
<dbReference type="GO" id="GO:0006281">
    <property type="term" value="P:DNA repair"/>
    <property type="evidence" value="ECO:0007669"/>
    <property type="project" value="TreeGrafter"/>
</dbReference>
<dbReference type="GO" id="GO:0019700">
    <property type="term" value="P:organic phosphonate catabolic process"/>
    <property type="evidence" value="ECO:0007669"/>
    <property type="project" value="InterPro"/>
</dbReference>
<dbReference type="CDD" id="cd02586">
    <property type="entry name" value="HAD_PHN"/>
    <property type="match status" value="1"/>
</dbReference>
<dbReference type="FunFam" id="1.10.150.240:FF:000006">
    <property type="entry name" value="Phosphonoacetaldehyde hydrolase"/>
    <property type="match status" value="1"/>
</dbReference>
<dbReference type="FunFam" id="3.40.50.1000:FF:000072">
    <property type="entry name" value="Phosphonoacetaldehyde hydrolase"/>
    <property type="match status" value="1"/>
</dbReference>
<dbReference type="Gene3D" id="3.40.50.1000">
    <property type="entry name" value="HAD superfamily/HAD-like"/>
    <property type="match status" value="1"/>
</dbReference>
<dbReference type="Gene3D" id="1.10.150.240">
    <property type="entry name" value="Putative phosphatase, domain 2"/>
    <property type="match status" value="1"/>
</dbReference>
<dbReference type="HAMAP" id="MF_01375">
    <property type="entry name" value="PhnX"/>
    <property type="match status" value="1"/>
</dbReference>
<dbReference type="InterPro" id="IPR050155">
    <property type="entry name" value="HAD-like_hydrolase_sf"/>
</dbReference>
<dbReference type="InterPro" id="IPR036412">
    <property type="entry name" value="HAD-like_sf"/>
</dbReference>
<dbReference type="InterPro" id="IPR006439">
    <property type="entry name" value="HAD-SF_hydro_IA"/>
</dbReference>
<dbReference type="InterPro" id="IPR023214">
    <property type="entry name" value="HAD_sf"/>
</dbReference>
<dbReference type="InterPro" id="IPR023198">
    <property type="entry name" value="PGP-like_dom2"/>
</dbReference>
<dbReference type="InterPro" id="IPR006323">
    <property type="entry name" value="Phosphonoacetald_hydro"/>
</dbReference>
<dbReference type="NCBIfam" id="TIGR01509">
    <property type="entry name" value="HAD-SF-IA-v3"/>
    <property type="match status" value="1"/>
</dbReference>
<dbReference type="NCBIfam" id="TIGR01422">
    <property type="entry name" value="phosphonatase"/>
    <property type="match status" value="1"/>
</dbReference>
<dbReference type="PANTHER" id="PTHR43434">
    <property type="entry name" value="PHOSPHOGLYCOLATE PHOSPHATASE"/>
    <property type="match status" value="1"/>
</dbReference>
<dbReference type="PANTHER" id="PTHR43434:SF19">
    <property type="entry name" value="PHOSPHONOACETALDEHYDE HYDROLASE"/>
    <property type="match status" value="1"/>
</dbReference>
<dbReference type="Pfam" id="PF00702">
    <property type="entry name" value="Hydrolase"/>
    <property type="match status" value="1"/>
</dbReference>
<dbReference type="SFLD" id="SFLDS00003">
    <property type="entry name" value="Haloacid_Dehalogenase"/>
    <property type="match status" value="1"/>
</dbReference>
<dbReference type="SFLD" id="SFLDF00038">
    <property type="entry name" value="phosphonoacetaldehyde_hydrolas"/>
    <property type="match status" value="1"/>
</dbReference>
<dbReference type="SUPFAM" id="SSF56784">
    <property type="entry name" value="HAD-like"/>
    <property type="match status" value="1"/>
</dbReference>
<reference key="1">
    <citation type="journal article" date="2009" name="BMC Genomics">
        <title>Pseudogene accumulation in the evolutionary histories of Salmonella enterica serovars Paratyphi A and Typhi.</title>
        <authorList>
            <person name="Holt K.E."/>
            <person name="Thomson N.R."/>
            <person name="Wain J."/>
            <person name="Langridge G.C."/>
            <person name="Hasan R."/>
            <person name="Bhutta Z.A."/>
            <person name="Quail M.A."/>
            <person name="Norbertczak H."/>
            <person name="Walker D."/>
            <person name="Simmonds M."/>
            <person name="White B."/>
            <person name="Bason N."/>
            <person name="Mungall K."/>
            <person name="Dougan G."/>
            <person name="Parkhill J."/>
        </authorList>
    </citation>
    <scope>NUCLEOTIDE SEQUENCE [LARGE SCALE GENOMIC DNA]</scope>
    <source>
        <strain>AKU_12601</strain>
    </source>
</reference>